<sequence>MIRFELGNQICVCLSENDISLEINNTLHHAIPVSSNEYAILSTIATYGSLNAPISQRVIERKITQHYKMALPENGFKNAVAALRKKFRKLTEDHVSPTRNIIENIHRTGYFIPFTMLHTHQSGIYQQKRINQHTKNSVRKALRICLRNKRIYTDIAWVLLVTTAIFFSVCYYAINSIVKHNYLDSALDIADSLSQMSCYADEDQLKGLFDNVKLVESSMMLDRFNIRCLVTPEAVVPVSQKAFNEWSDNSNYTTQSFDINNATILVRVKNINLQNNVESHISRFFLSGMKLYTNTGTSFEIGNTNGRYFHYQIKDTGYKEVYYISGPLKSIILLSLFFLVILRHRSLQAFITYLFAIREFHIKLEPIYNTSTQQNIHYEALSRFKVKNTQRFIETLISNGLLLIHTILVIRAIYAKQPTLLVPISINVCPSLLRGRNFSTLYQELASRDCRLLTIEITENASMYYTSEIYDNVAKLKLLNCKISIDDFGTGNNNVSLISKINPDYLKIDREFVIGLKSDDKKVETLRQLIAMGNTYRCTVIVEGVETADSAHLLTTLGAYIHQGYFYPLHF</sequence>
<protein>
    <recommendedName>
        <fullName evidence="5">Cyclic di-GMP phosphodiesterase TpdA</fullName>
        <shortName evidence="4">c-di-GMP phosphodiesterase</shortName>
        <ecNumber evidence="6">3.1.4.52</ecNumber>
    </recommendedName>
    <alternativeName>
        <fullName evidence="4">Trigger PDE</fullName>
    </alternativeName>
    <alternativeName>
        <fullName evidence="4">Trigger phosphodiesterase A</fullName>
    </alternativeName>
</protein>
<feature type="chain" id="PRO_0000458476" description="Cyclic di-GMP phosphodiesterase TpdA">
    <location>
        <begin position="1"/>
        <end position="571"/>
    </location>
</feature>
<feature type="transmembrane region" description="Helical" evidence="1">
    <location>
        <begin position="155"/>
        <end position="175"/>
    </location>
</feature>
<feature type="transmembrane region" description="Helical" evidence="1">
    <location>
        <begin position="321"/>
        <end position="341"/>
    </location>
</feature>
<feature type="transmembrane region" description="Helical" evidence="1">
    <location>
        <begin position="395"/>
        <end position="415"/>
    </location>
</feature>
<feature type="domain" description="EAL" evidence="2">
    <location>
        <begin position="344"/>
        <end position="571"/>
    </location>
</feature>
<comment type="function">
    <text evidence="3">Cyclic di-GMP phosphodiesterase that plays an important role in modulating the global c-di-GMP pool (PubMed:33846117). Its ability to alter the c-di-GMP pool has an effect on swimming motility, swarming motility and biofilm formation, multicellular behaviors that are important for the survival and dissemination of this environmental pathogen (PubMed:33846117). Exhibits a dual function, namely, c-di-GMP degradation and modulation of its own expression (PubMed:33846117).</text>
</comment>
<comment type="catalytic activity">
    <reaction evidence="6">
        <text>3',3'-c-di-GMP + H2O = 5'-phosphoguanylyl(3'-&gt;5')guanosine + H(+)</text>
        <dbReference type="Rhea" id="RHEA:24902"/>
        <dbReference type="ChEBI" id="CHEBI:15377"/>
        <dbReference type="ChEBI" id="CHEBI:15378"/>
        <dbReference type="ChEBI" id="CHEBI:58754"/>
        <dbReference type="ChEBI" id="CHEBI:58805"/>
        <dbReference type="EC" id="3.1.4.52"/>
    </reaction>
</comment>
<comment type="subcellular location">
    <subcellularLocation>
        <location evidence="5">Cell inner membrane</location>
        <topology evidence="1">Multi-pass membrane protein</topology>
    </subcellularLocation>
</comment>
<comment type="induction">
    <text evidence="3">Promotes its own expression when the levels of c-di-GMP are low or when its enzyme activity is inhibited.</text>
</comment>
<comment type="domain">
    <text evidence="3">Contains a putative N-terminal DNA-binding domain, followed by a degenerated GGDEF-like domain and a conserved C-terminal EAL domain.</text>
</comment>
<comment type="disruption phenotype">
    <text evidence="3">Deletion of the gene results in 33% and 61% increase in c-di-GMP levels compared to the wild-type strain in cells grown to the exponential and stationary phases, respectively (PubMed:33846117). Deletion mutant shows a decrease in swimming motility (PubMed:33846117).</text>
</comment>
<comment type="miscellaneous">
    <text evidence="3">Overexpression of the gene results in 52% and 60% decrease in c-di-GMP levels compared to the wild-type strain in cells grown to the exponential and stationary phases, respectively (PubMed:33846117). Overexpression promotes swarming motility and expression of the swarming gene lafA, but it inhibits biofilm formation and expression of the biofilm gene cpsA (PubMed:33846117).</text>
</comment>
<keyword id="KW-0973">c-di-GMP</keyword>
<keyword id="KW-0997">Cell inner membrane</keyword>
<keyword id="KW-1003">Cell membrane</keyword>
<keyword id="KW-0378">Hydrolase</keyword>
<keyword id="KW-0472">Membrane</keyword>
<keyword id="KW-0812">Transmembrane</keyword>
<keyword id="KW-1133">Transmembrane helix</keyword>
<name>TPDA_VIBPA</name>
<proteinExistence type="evidence at protein level"/>
<dbReference type="EC" id="3.1.4.52" evidence="6"/>
<dbReference type="EMBL" id="BA000031">
    <property type="protein sequence ID" value="BAC60144.1"/>
    <property type="molecule type" value="Genomic_DNA"/>
</dbReference>
<dbReference type="RefSeq" id="NP_798260.1">
    <property type="nucleotide sequence ID" value="NC_004603.1"/>
</dbReference>
<dbReference type="RefSeq" id="WP_005483257.1">
    <property type="nucleotide sequence ID" value="NC_004603.1"/>
</dbReference>
<dbReference type="SMR" id="Q87NI7"/>
<dbReference type="GeneID" id="1189388"/>
<dbReference type="KEGG" id="vpa:VP1881"/>
<dbReference type="PATRIC" id="fig|223926.6.peg.1796"/>
<dbReference type="eggNOG" id="COG5001">
    <property type="taxonomic scope" value="Bacteria"/>
</dbReference>
<dbReference type="HOGENOM" id="CLU_034549_0_0_6"/>
<dbReference type="Proteomes" id="UP000002493">
    <property type="component" value="Chromosome 1"/>
</dbReference>
<dbReference type="GO" id="GO:0005886">
    <property type="term" value="C:plasma membrane"/>
    <property type="evidence" value="ECO:0007669"/>
    <property type="project" value="UniProtKB-SubCell"/>
</dbReference>
<dbReference type="GO" id="GO:0071111">
    <property type="term" value="F:cyclic-guanylate-specific phosphodiesterase activity"/>
    <property type="evidence" value="ECO:0007669"/>
    <property type="project" value="InterPro"/>
</dbReference>
<dbReference type="CDD" id="cd01948">
    <property type="entry name" value="EAL"/>
    <property type="match status" value="1"/>
</dbReference>
<dbReference type="Gene3D" id="3.20.20.450">
    <property type="entry name" value="EAL domain"/>
    <property type="match status" value="1"/>
</dbReference>
<dbReference type="InterPro" id="IPR050706">
    <property type="entry name" value="Cyclic-di-GMP_PDE-like"/>
</dbReference>
<dbReference type="InterPro" id="IPR001633">
    <property type="entry name" value="EAL_dom"/>
</dbReference>
<dbReference type="InterPro" id="IPR035919">
    <property type="entry name" value="EAL_sf"/>
</dbReference>
<dbReference type="PANTHER" id="PTHR33121">
    <property type="entry name" value="CYCLIC DI-GMP PHOSPHODIESTERASE PDEF"/>
    <property type="match status" value="1"/>
</dbReference>
<dbReference type="PANTHER" id="PTHR33121:SF70">
    <property type="entry name" value="SIGNALING PROTEIN YKOW"/>
    <property type="match status" value="1"/>
</dbReference>
<dbReference type="Pfam" id="PF00563">
    <property type="entry name" value="EAL"/>
    <property type="match status" value="1"/>
</dbReference>
<dbReference type="SMART" id="SM00052">
    <property type="entry name" value="EAL"/>
    <property type="match status" value="1"/>
</dbReference>
<dbReference type="SUPFAM" id="SSF141868">
    <property type="entry name" value="EAL domain-like"/>
    <property type="match status" value="1"/>
</dbReference>
<dbReference type="PROSITE" id="PS50883">
    <property type="entry name" value="EAL"/>
    <property type="match status" value="1"/>
</dbReference>
<reference key="1">
    <citation type="journal article" date="2003" name="Lancet">
        <title>Genome sequence of Vibrio parahaemolyticus: a pathogenic mechanism distinct from that of V. cholerae.</title>
        <authorList>
            <person name="Makino K."/>
            <person name="Oshima K."/>
            <person name="Kurokawa K."/>
            <person name="Yokoyama K."/>
            <person name="Uda T."/>
            <person name="Tagomori K."/>
            <person name="Iijima Y."/>
            <person name="Najima M."/>
            <person name="Nakano M."/>
            <person name="Yamashita A."/>
            <person name="Kubota Y."/>
            <person name="Kimura S."/>
            <person name="Yasunaga T."/>
            <person name="Honda T."/>
            <person name="Shinagawa H."/>
            <person name="Hattori M."/>
            <person name="Iida T."/>
        </authorList>
    </citation>
    <scope>NUCLEOTIDE SEQUENCE [LARGE SCALE GENOMIC DNA]</scope>
    <source>
        <strain>RIMD 2210633</strain>
    </source>
</reference>
<reference key="2">
    <citation type="journal article" date="2021" name="J. Bacteriol.">
        <title>A trigger phosphodiesterase modulates the global c-di-GMP pool, motility, and biofilm formation in Vibrio parahaemolyticus.</title>
        <authorList>
            <person name="Martinez-Mendez R."/>
            <person name="Camacho-Hernandez D.A."/>
            <person name="Sulvaran-Guel E."/>
            <person name="Zamorano-Sanchez D."/>
        </authorList>
    </citation>
    <scope>FUNCTION IN REGULATION OF C-DI-GMP POOL</scope>
    <scope>INDUCTION</scope>
    <scope>DOMAIN</scope>
    <scope>DISRUPTION PHENOTYPE</scope>
    <scope>OVEREXPRESSION</scope>
    <source>
        <strain>RIMD 2210633</strain>
    </source>
</reference>
<accession>Q87NI7</accession>
<gene>
    <name evidence="4" type="primary">tpdA</name>
    <name evidence="7" type="ordered locus">VP1881</name>
</gene>
<evidence type="ECO:0000255" key="1"/>
<evidence type="ECO:0000255" key="2">
    <source>
        <dbReference type="PROSITE-ProRule" id="PRU00074"/>
    </source>
</evidence>
<evidence type="ECO:0000269" key="3">
    <source>
    </source>
</evidence>
<evidence type="ECO:0000303" key="4">
    <source>
    </source>
</evidence>
<evidence type="ECO:0000305" key="5"/>
<evidence type="ECO:0000305" key="6">
    <source>
    </source>
</evidence>
<evidence type="ECO:0000312" key="7">
    <source>
        <dbReference type="EMBL" id="BAC60144.1"/>
    </source>
</evidence>
<organism>
    <name type="scientific">Vibrio parahaemolyticus serotype O3:K6 (strain RIMD 2210633)</name>
    <dbReference type="NCBI Taxonomy" id="223926"/>
    <lineage>
        <taxon>Bacteria</taxon>
        <taxon>Pseudomonadati</taxon>
        <taxon>Pseudomonadota</taxon>
        <taxon>Gammaproteobacteria</taxon>
        <taxon>Vibrionales</taxon>
        <taxon>Vibrionaceae</taxon>
        <taxon>Vibrio</taxon>
    </lineage>
</organism>